<dbReference type="EC" id="1.14.11.8"/>
<dbReference type="EMBL" id="AJ421151">
    <property type="protein sequence ID" value="CAD12887.1"/>
    <property type="molecule type" value="mRNA"/>
</dbReference>
<dbReference type="EMBL" id="AL451018">
    <property type="protein sequence ID" value="CAD11356.1"/>
    <property type="status" value="ALT_SEQ"/>
    <property type="molecule type" value="Genomic_DNA"/>
</dbReference>
<dbReference type="EMBL" id="CM002240">
    <property type="protein sequence ID" value="EAA31955.3"/>
    <property type="molecule type" value="Genomic_DNA"/>
</dbReference>
<dbReference type="RefSeq" id="XP_961191.3">
    <property type="nucleotide sequence ID" value="XM_956098.3"/>
</dbReference>
<dbReference type="SMR" id="Q96UB1"/>
<dbReference type="FunCoup" id="Q96UB1">
    <property type="interactions" value="612"/>
</dbReference>
<dbReference type="EnsemblFungi" id="EAA31955">
    <property type="protein sequence ID" value="EAA31955"/>
    <property type="gene ID" value="NCU03802"/>
</dbReference>
<dbReference type="GeneID" id="3877351"/>
<dbReference type="KEGG" id="ncr:NCU03802"/>
<dbReference type="VEuPathDB" id="FungiDB:NCU03802"/>
<dbReference type="HOGENOM" id="CLU_021859_2_2_1"/>
<dbReference type="InParanoid" id="Q96UB1"/>
<dbReference type="OrthoDB" id="408743at2759"/>
<dbReference type="UniPathway" id="UPA00118"/>
<dbReference type="Proteomes" id="UP000001805">
    <property type="component" value="Chromosome 2, Linkage Group V"/>
</dbReference>
<dbReference type="GO" id="GO:0005739">
    <property type="term" value="C:mitochondrion"/>
    <property type="evidence" value="ECO:0000318"/>
    <property type="project" value="GO_Central"/>
</dbReference>
<dbReference type="GO" id="GO:0046872">
    <property type="term" value="F:metal ion binding"/>
    <property type="evidence" value="ECO:0007669"/>
    <property type="project" value="UniProtKB-KW"/>
</dbReference>
<dbReference type="GO" id="GO:0050353">
    <property type="term" value="F:trimethyllysine dioxygenase activity"/>
    <property type="evidence" value="ECO:0007669"/>
    <property type="project" value="UniProtKB-EC"/>
</dbReference>
<dbReference type="GO" id="GO:0045329">
    <property type="term" value="P:carnitine biosynthetic process"/>
    <property type="evidence" value="ECO:0000318"/>
    <property type="project" value="GO_Central"/>
</dbReference>
<dbReference type="CDD" id="cd00250">
    <property type="entry name" value="CAS_like"/>
    <property type="match status" value="1"/>
</dbReference>
<dbReference type="FunFam" id="3.30.2020.30:FF:000002">
    <property type="entry name" value="Putative gamma-butyrobetaine dioxygenase"/>
    <property type="match status" value="1"/>
</dbReference>
<dbReference type="Gene3D" id="3.30.2020.30">
    <property type="match status" value="1"/>
</dbReference>
<dbReference type="Gene3D" id="3.60.130.10">
    <property type="entry name" value="Clavaminate synthase-like"/>
    <property type="match status" value="1"/>
</dbReference>
<dbReference type="InterPro" id="IPR050411">
    <property type="entry name" value="AlphaKG_dependent_hydroxylases"/>
</dbReference>
<dbReference type="InterPro" id="IPR010376">
    <property type="entry name" value="GBBH-like_N"/>
</dbReference>
<dbReference type="InterPro" id="IPR038492">
    <property type="entry name" value="GBBH-like_N_sf"/>
</dbReference>
<dbReference type="InterPro" id="IPR042098">
    <property type="entry name" value="TauD-like_sf"/>
</dbReference>
<dbReference type="InterPro" id="IPR003819">
    <property type="entry name" value="TauD/TfdA-like"/>
</dbReference>
<dbReference type="PANTHER" id="PTHR10696">
    <property type="entry name" value="GAMMA-BUTYROBETAINE HYDROXYLASE-RELATED"/>
    <property type="match status" value="1"/>
</dbReference>
<dbReference type="PANTHER" id="PTHR10696:SF51">
    <property type="entry name" value="TRIMETHYLLYSINE DIOXYGENASE, MITOCHONDRIAL"/>
    <property type="match status" value="1"/>
</dbReference>
<dbReference type="Pfam" id="PF06155">
    <property type="entry name" value="GBBH-like_N"/>
    <property type="match status" value="1"/>
</dbReference>
<dbReference type="Pfam" id="PF02668">
    <property type="entry name" value="TauD"/>
    <property type="match status" value="2"/>
</dbReference>
<dbReference type="SUPFAM" id="SSF51197">
    <property type="entry name" value="Clavaminate synthase-like"/>
    <property type="match status" value="1"/>
</dbReference>
<name>TMLH_NEUCR</name>
<protein>
    <recommendedName>
        <fullName>Trimethyllysine dioxygenase</fullName>
        <ecNumber>1.14.11.8</ecNumber>
    </recommendedName>
    <alternativeName>
        <fullName>Carnitine biosynthesis protein 1</fullName>
    </alternativeName>
    <alternativeName>
        <fullName>Epsilon-trimethyllysine 2-oxoglutarate dioxygenase</fullName>
    </alternativeName>
    <alternativeName>
        <fullName>TML hydroxylase</fullName>
    </alternativeName>
    <alternativeName>
        <fullName>TML-alpha-ketoglutarate dioxygenase</fullName>
        <shortName>TML dioxygenase</shortName>
        <shortName>TMLD</shortName>
    </alternativeName>
</protein>
<accession>Q96UB1</accession>
<accession>Q7S7S2</accession>
<accession>Q8NIQ9</accession>
<gene>
    <name type="primary">cbs-1</name>
    <name type="ORF">99H12.050</name>
    <name type="ORF">NCU03802</name>
</gene>
<reference key="1">
    <citation type="journal article" date="2002" name="FEMS Microbiol. Lett.">
        <title>Carnitine biosynthesis in Neurospora crassa: identification of a cDNA coding for epsilon-N-trimethyllysine hydroxylase and its functional expression in Saccharomyces cerevisiae.</title>
        <authorList>
            <person name="Swiegers J.H."/>
            <person name="Vaz F.M."/>
            <person name="Pretorius I.S."/>
            <person name="Wanders R.J.A."/>
            <person name="Bauer F.F."/>
        </authorList>
    </citation>
    <scope>NUCLEOTIDE SEQUENCE [MRNA]</scope>
</reference>
<reference key="2">
    <citation type="journal article" date="2003" name="Nucleic Acids Res.">
        <title>What's in the genome of a filamentous fungus? Analysis of the Neurospora genome sequence.</title>
        <authorList>
            <person name="Mannhaupt G."/>
            <person name="Montrone C."/>
            <person name="Haase D."/>
            <person name="Mewes H.-W."/>
            <person name="Aign V."/>
            <person name="Hoheisel J.D."/>
            <person name="Fartmann B."/>
            <person name="Nyakatura G."/>
            <person name="Kempken F."/>
            <person name="Maier J."/>
            <person name="Schulte U."/>
        </authorList>
    </citation>
    <scope>NUCLEOTIDE SEQUENCE [LARGE SCALE GENOMIC DNA]</scope>
    <source>
        <strain>ATCC 24698 / 74-OR23-1A / CBS 708.71 / DSM 1257 / FGSC 987</strain>
    </source>
</reference>
<reference key="3">
    <citation type="journal article" date="2003" name="Nature">
        <title>The genome sequence of the filamentous fungus Neurospora crassa.</title>
        <authorList>
            <person name="Galagan J.E."/>
            <person name="Calvo S.E."/>
            <person name="Borkovich K.A."/>
            <person name="Selker E.U."/>
            <person name="Read N.D."/>
            <person name="Jaffe D.B."/>
            <person name="FitzHugh W."/>
            <person name="Ma L.-J."/>
            <person name="Smirnov S."/>
            <person name="Purcell S."/>
            <person name="Rehman B."/>
            <person name="Elkins T."/>
            <person name="Engels R."/>
            <person name="Wang S."/>
            <person name="Nielsen C.B."/>
            <person name="Butler J."/>
            <person name="Endrizzi M."/>
            <person name="Qui D."/>
            <person name="Ianakiev P."/>
            <person name="Bell-Pedersen D."/>
            <person name="Nelson M.A."/>
            <person name="Werner-Washburne M."/>
            <person name="Selitrennikoff C.P."/>
            <person name="Kinsey J.A."/>
            <person name="Braun E.L."/>
            <person name="Zelter A."/>
            <person name="Schulte U."/>
            <person name="Kothe G.O."/>
            <person name="Jedd G."/>
            <person name="Mewes H.-W."/>
            <person name="Staben C."/>
            <person name="Marcotte E."/>
            <person name="Greenberg D."/>
            <person name="Roy A."/>
            <person name="Foley K."/>
            <person name="Naylor J."/>
            <person name="Stange-Thomann N."/>
            <person name="Barrett R."/>
            <person name="Gnerre S."/>
            <person name="Kamal M."/>
            <person name="Kamvysselis M."/>
            <person name="Mauceli E.W."/>
            <person name="Bielke C."/>
            <person name="Rudd S."/>
            <person name="Frishman D."/>
            <person name="Krystofova S."/>
            <person name="Rasmussen C."/>
            <person name="Metzenberg R.L."/>
            <person name="Perkins D.D."/>
            <person name="Kroken S."/>
            <person name="Cogoni C."/>
            <person name="Macino G."/>
            <person name="Catcheside D.E.A."/>
            <person name="Li W."/>
            <person name="Pratt R.J."/>
            <person name="Osmani S.A."/>
            <person name="DeSouza C.P.C."/>
            <person name="Glass N.L."/>
            <person name="Orbach M.J."/>
            <person name="Berglund J.A."/>
            <person name="Voelker R."/>
            <person name="Yarden O."/>
            <person name="Plamann M."/>
            <person name="Seiler S."/>
            <person name="Dunlap J.C."/>
            <person name="Radford A."/>
            <person name="Aramayo R."/>
            <person name="Natvig D.O."/>
            <person name="Alex L.A."/>
            <person name="Mannhaupt G."/>
            <person name="Ebbole D.J."/>
            <person name="Freitag M."/>
            <person name="Paulsen I."/>
            <person name="Sachs M.S."/>
            <person name="Lander E.S."/>
            <person name="Nusbaum C."/>
            <person name="Birren B.W."/>
        </authorList>
    </citation>
    <scope>NUCLEOTIDE SEQUENCE [LARGE SCALE GENOMIC DNA]</scope>
    <source>
        <strain>ATCC 24698 / 74-OR23-1A / CBS 708.71 / DSM 1257 / FGSC 987</strain>
    </source>
</reference>
<proteinExistence type="evidence at transcript level"/>
<keyword id="KW-0124">Carnitine biosynthesis</keyword>
<keyword id="KW-0963">Cytoplasm</keyword>
<keyword id="KW-0223">Dioxygenase</keyword>
<keyword id="KW-0408">Iron</keyword>
<keyword id="KW-0479">Metal-binding</keyword>
<keyword id="KW-0560">Oxidoreductase</keyword>
<keyword id="KW-1185">Reference proteome</keyword>
<comment type="function">
    <text>Converts trimethyllysine (TML) into hydroxytrimethyllysine (HTML).</text>
</comment>
<comment type="catalytic activity">
    <reaction>
        <text>N(6),N(6),N(6)-trimethyl-L-lysine + 2-oxoglutarate + O2 = (3S)-3-hydroxy-N(6),N(6),N(6)-trimethyl-L-lysine + succinate + CO2</text>
        <dbReference type="Rhea" id="RHEA:14181"/>
        <dbReference type="ChEBI" id="CHEBI:15379"/>
        <dbReference type="ChEBI" id="CHEBI:16526"/>
        <dbReference type="ChEBI" id="CHEBI:16810"/>
        <dbReference type="ChEBI" id="CHEBI:30031"/>
        <dbReference type="ChEBI" id="CHEBI:58100"/>
        <dbReference type="ChEBI" id="CHEBI:141499"/>
        <dbReference type="EC" id="1.14.11.8"/>
    </reaction>
</comment>
<comment type="cofactor">
    <cofactor evidence="1">
        <name>Fe(2+)</name>
        <dbReference type="ChEBI" id="CHEBI:29033"/>
    </cofactor>
    <text evidence="1">Binds 1 Fe(2+) ion per subunit.</text>
</comment>
<comment type="cofactor">
    <cofactor>
        <name>L-ascorbate</name>
        <dbReference type="ChEBI" id="CHEBI:38290"/>
    </cofactor>
</comment>
<comment type="pathway">
    <text>Amine and polyamine biosynthesis; carnitine biosynthesis.</text>
</comment>
<comment type="subcellular location">
    <subcellularLocation>
        <location evidence="3">Cytoplasm</location>
    </subcellularLocation>
</comment>
<comment type="similarity">
    <text evidence="3">Belongs to the gamma-BBH/TMLD family.</text>
</comment>
<comment type="sequence caution" evidence="3">
    <conflict type="erroneous gene model prediction">
        <sequence resource="EMBL-CDS" id="CAD11356"/>
    </conflict>
</comment>
<evidence type="ECO:0000250" key="1"/>
<evidence type="ECO:0000256" key="2">
    <source>
        <dbReference type="SAM" id="MobiDB-lite"/>
    </source>
</evidence>
<evidence type="ECO:0000305" key="3"/>
<sequence length="471" mass="52630">MRPQVVGAILRSRAVVSRQPLSRTHIFAAVTVAKSSSPAQNSRRTFSSSFRRLYEPKAEITAEGLELSPPQAVTGGKRTVLPNFWLRDNCRCTKCVNQDTLQRNFNTFAIPSDIHPTKVEATKENVTVQWSDNHTSTYPWPFLSFYLTSNARGHENDQISLWGSEAGSRPPTVSFPRVMASDQGVADLTAMIKEFGFCFVKDTPHDDPDVTRQLLERIAFIRVTHYGGFYDFTPDLAMADTAYTNLALPAHTDTTYFTDPAGLQAFHLLEHKAAPSRPPPPPPPPPPPSEEKEAAGSAAGEAAAAAEGGKSLLVDGFNAARILKEEDPRAYEILSSVRLPWHASGNEGITIAPDKLYPVLELNEDTGELHRVRWNNDDRGVVPFGEKYSPSEWYEAARKWDGILRRKSSELWVQLEPGKPLIFDNWRVLHGRSAFSGIRRICGGYINRDDFISRWRNTNYPRSEVLPRVTG</sequence>
<organism>
    <name type="scientific">Neurospora crassa (strain ATCC 24698 / 74-OR23-1A / CBS 708.71 / DSM 1257 / FGSC 987)</name>
    <dbReference type="NCBI Taxonomy" id="367110"/>
    <lineage>
        <taxon>Eukaryota</taxon>
        <taxon>Fungi</taxon>
        <taxon>Dikarya</taxon>
        <taxon>Ascomycota</taxon>
        <taxon>Pezizomycotina</taxon>
        <taxon>Sordariomycetes</taxon>
        <taxon>Sordariomycetidae</taxon>
        <taxon>Sordariales</taxon>
        <taxon>Sordariaceae</taxon>
        <taxon>Neurospora</taxon>
    </lineage>
</organism>
<feature type="chain" id="PRO_0000207091" description="Trimethyllysine dioxygenase">
    <location>
        <begin position="1"/>
        <end position="471"/>
    </location>
</feature>
<feature type="region of interest" description="Disordered" evidence="2">
    <location>
        <begin position="272"/>
        <end position="302"/>
    </location>
</feature>
<feature type="compositionally biased region" description="Pro residues" evidence="2">
    <location>
        <begin position="276"/>
        <end position="288"/>
    </location>
</feature>
<feature type="binding site" evidence="1">
    <location>
        <position position="251"/>
    </location>
    <ligand>
        <name>Fe cation</name>
        <dbReference type="ChEBI" id="CHEBI:24875"/>
        <note>catalytic</note>
    </ligand>
</feature>
<feature type="binding site" evidence="1">
    <location>
        <position position="253"/>
    </location>
    <ligand>
        <name>Fe cation</name>
        <dbReference type="ChEBI" id="CHEBI:24875"/>
        <note>catalytic</note>
    </ligand>
</feature>
<feature type="binding site" evidence="1">
    <location>
        <position position="430"/>
    </location>
    <ligand>
        <name>Fe cation</name>
        <dbReference type="ChEBI" id="CHEBI:24875"/>
        <note>catalytic</note>
    </ligand>
</feature>
<feature type="sequence conflict" description="In Ref. 1; CAD12887." evidence="3" ref="1">
    <original>S</original>
    <variation>P</variation>
    <location>
        <position position="174"/>
    </location>
</feature>